<keyword id="KW-1185">Reference proteome</keyword>
<keyword id="KW-0964">Secreted</keyword>
<keyword id="KW-0732">Signal</keyword>
<dbReference type="EMBL" id="FJ807766">
    <property type="protein sequence ID" value="ACQ73208.1"/>
    <property type="molecule type" value="Genomic_DNA"/>
</dbReference>
<dbReference type="EMBL" id="CM001235">
    <property type="protein sequence ID" value="EHA49227.1"/>
    <property type="molecule type" value="Genomic_DNA"/>
</dbReference>
<dbReference type="RefSeq" id="XP_003718811.1">
    <property type="nucleotide sequence ID" value="XM_003718763.1"/>
</dbReference>
<dbReference type="STRING" id="242507.G5EHH0"/>
<dbReference type="EnsemblFungi" id="MGG_11610T0">
    <property type="protein sequence ID" value="MGG_11610T0"/>
    <property type="gene ID" value="MGG_11610"/>
</dbReference>
<dbReference type="GeneID" id="5050770"/>
<dbReference type="KEGG" id="mgr:MGG_11610"/>
<dbReference type="VEuPathDB" id="FungiDB:MGG_11610"/>
<dbReference type="eggNOG" id="ENOG502T4TA">
    <property type="taxonomic scope" value="Eukaryota"/>
</dbReference>
<dbReference type="HOGENOM" id="CLU_163491_0_0_1"/>
<dbReference type="InParanoid" id="G5EHH0"/>
<dbReference type="OMA" id="SVCRTQC"/>
<dbReference type="OrthoDB" id="4848580at2759"/>
<dbReference type="Proteomes" id="UP000009058">
    <property type="component" value="Chromosome 5"/>
</dbReference>
<dbReference type="GO" id="GO:0005576">
    <property type="term" value="C:extracellular region"/>
    <property type="evidence" value="ECO:0007669"/>
    <property type="project" value="UniProtKB-SubCell"/>
</dbReference>
<gene>
    <name evidence="3" type="primary">BAS3</name>
    <name type="ORF">MGG_11610</name>
</gene>
<organism>
    <name type="scientific">Pyricularia oryzae (strain 70-15 / ATCC MYA-4617 / FGSC 8958)</name>
    <name type="common">Rice blast fungus</name>
    <name type="synonym">Magnaporthe oryzae</name>
    <dbReference type="NCBI Taxonomy" id="242507"/>
    <lineage>
        <taxon>Eukaryota</taxon>
        <taxon>Fungi</taxon>
        <taxon>Dikarya</taxon>
        <taxon>Ascomycota</taxon>
        <taxon>Pezizomycotina</taxon>
        <taxon>Sordariomycetes</taxon>
        <taxon>Sordariomycetidae</taxon>
        <taxon>Magnaporthales</taxon>
        <taxon>Pyriculariaceae</taxon>
        <taxon>Pyricularia</taxon>
    </lineage>
</organism>
<protein>
    <recommendedName>
        <fullName evidence="3">Biotrophy-associated secreted protein 3</fullName>
    </recommendedName>
</protein>
<evidence type="ECO:0000255" key="1"/>
<evidence type="ECO:0000269" key="2">
    <source>
    </source>
</evidence>
<evidence type="ECO:0000303" key="3">
    <source>
    </source>
</evidence>
<accession>G5EHH0</accession>
<comment type="function">
    <text evidence="2">Secreted effector involved in biotrophic colonization of plant cells.</text>
</comment>
<comment type="subcellular location">
    <subcellularLocation>
        <location evidence="2">Secreted</location>
    </subcellularLocation>
    <text evidence="2">Localizes to the appressorial penetration site and outlines the primary hyphae.</text>
</comment>
<comment type="induction">
    <text evidence="2">Expression is highly up-regulated in invasive hyphae.</text>
</comment>
<sequence length="113" mass="12039">MQFSTVSFAIFAILPAMVAAMPAETSPVPKPALPVFEELCPDAERQKCAESTDNLKRCLQINGASICVIDCGSQTTCRTQCKQQLKNEKANGFCTVGDNPCICNLNGAANSAH</sequence>
<proteinExistence type="evidence at transcript level"/>
<feature type="signal peptide" evidence="1">
    <location>
        <begin position="1"/>
        <end position="20"/>
    </location>
</feature>
<feature type="chain" id="PRO_5007915055" description="Biotrophy-associated secreted protein 3">
    <location>
        <begin position="21"/>
        <end position="113"/>
    </location>
</feature>
<reference key="1">
    <citation type="journal article" date="2009" name="Plant Cell">
        <title>Interaction transcriptome analysis identifies Magnaporthe oryzae BAS1-4 as Biotrophy-associated secreted proteins in rice blast disease.</title>
        <authorList>
            <person name="Mosquera G."/>
            <person name="Giraldo M.C."/>
            <person name="Khang C.H."/>
            <person name="Coughlan S."/>
            <person name="Valent B."/>
        </authorList>
    </citation>
    <scope>NUCLEOTIDE SEQUENCE [GENOMIC DNA]</scope>
    <scope>INDUCTION</scope>
    <scope>FUNCTION</scope>
    <scope>SUBCELLULAR LOCATION</scope>
    <source>
        <strain>70-15 / ATCC MYA-4617 / FGSC 8958</strain>
    </source>
</reference>
<reference key="2">
    <citation type="journal article" date="2005" name="Nature">
        <title>The genome sequence of the rice blast fungus Magnaporthe grisea.</title>
        <authorList>
            <person name="Dean R.A."/>
            <person name="Talbot N.J."/>
            <person name="Ebbole D.J."/>
            <person name="Farman M.L."/>
            <person name="Mitchell T.K."/>
            <person name="Orbach M.J."/>
            <person name="Thon M.R."/>
            <person name="Kulkarni R."/>
            <person name="Xu J.-R."/>
            <person name="Pan H."/>
            <person name="Read N.D."/>
            <person name="Lee Y.-H."/>
            <person name="Carbone I."/>
            <person name="Brown D."/>
            <person name="Oh Y.Y."/>
            <person name="Donofrio N."/>
            <person name="Jeong J.S."/>
            <person name="Soanes D.M."/>
            <person name="Djonovic S."/>
            <person name="Kolomiets E."/>
            <person name="Rehmeyer C."/>
            <person name="Li W."/>
            <person name="Harding M."/>
            <person name="Kim S."/>
            <person name="Lebrun M.-H."/>
            <person name="Bohnert H."/>
            <person name="Coughlan S."/>
            <person name="Butler J."/>
            <person name="Calvo S.E."/>
            <person name="Ma L.-J."/>
            <person name="Nicol R."/>
            <person name="Purcell S."/>
            <person name="Nusbaum C."/>
            <person name="Galagan J.E."/>
            <person name="Birren B.W."/>
        </authorList>
    </citation>
    <scope>NUCLEOTIDE SEQUENCE [LARGE SCALE GENOMIC DNA]</scope>
    <source>
        <strain>70-15 / ATCC MYA-4617 / FGSC 8958</strain>
    </source>
</reference>
<name>BAS3_PYRO7</name>